<comment type="function">
    <text evidence="1">The GINS complex plays an essential role in the initiation of DNA replication.</text>
</comment>
<comment type="subunit">
    <text evidence="1">Component of the GINS complex which is a heterotetramer of SLD5, PSF1, PSF2 and PSF3.</text>
</comment>
<comment type="subcellular location">
    <subcellularLocation>
        <location evidence="1">Nucleus</location>
    </subcellularLocation>
</comment>
<comment type="similarity">
    <text evidence="2">Belongs to the GINS1/PSF1 family.</text>
</comment>
<proteinExistence type="inferred from homology"/>
<feature type="chain" id="PRO_0000278399" description="DNA replication complex GINS protein PSF1">
    <location>
        <begin position="1"/>
        <end position="218"/>
    </location>
</feature>
<accession>P0CQ28</accession>
<accession>Q55PE3</accession>
<accession>Q5KE14</accession>
<sequence>MYGDLALQLVNSSHRTTLSSTPQLPLPKYALPLILSICLETRQLGTSIASIAESHGQLSLTQDRGLVCNLTVQHLAARRNKRCMLAYLATRVGGIKERWWDAGGGLAYLLSPAASASVNPEADAPDLRSALSPQELDFLRGYNNLLLDYKSDFLDVLDLTAGIEKPPGEIMVDVRVVRDAGEVFLDSGERVDFRKGQRFRLERAQVERLIIQGYLEEV</sequence>
<gene>
    <name type="primary">PSF1</name>
    <name type="ordered locus">CNG02090</name>
</gene>
<keyword id="KW-0235">DNA replication</keyword>
<keyword id="KW-0539">Nucleus</keyword>
<keyword id="KW-1185">Reference proteome</keyword>
<reference key="1">
    <citation type="journal article" date="2005" name="Science">
        <title>The genome of the basidiomycetous yeast and human pathogen Cryptococcus neoformans.</title>
        <authorList>
            <person name="Loftus B.J."/>
            <person name="Fung E."/>
            <person name="Roncaglia P."/>
            <person name="Rowley D."/>
            <person name="Amedeo P."/>
            <person name="Bruno D."/>
            <person name="Vamathevan J."/>
            <person name="Miranda M."/>
            <person name="Anderson I.J."/>
            <person name="Fraser J.A."/>
            <person name="Allen J.E."/>
            <person name="Bosdet I.E."/>
            <person name="Brent M.R."/>
            <person name="Chiu R."/>
            <person name="Doering T.L."/>
            <person name="Donlin M.J."/>
            <person name="D'Souza C.A."/>
            <person name="Fox D.S."/>
            <person name="Grinberg V."/>
            <person name="Fu J."/>
            <person name="Fukushima M."/>
            <person name="Haas B.J."/>
            <person name="Huang J.C."/>
            <person name="Janbon G."/>
            <person name="Jones S.J.M."/>
            <person name="Koo H.L."/>
            <person name="Krzywinski M.I."/>
            <person name="Kwon-Chung K.J."/>
            <person name="Lengeler K.B."/>
            <person name="Maiti R."/>
            <person name="Marra M.A."/>
            <person name="Marra R.E."/>
            <person name="Mathewson C.A."/>
            <person name="Mitchell T.G."/>
            <person name="Pertea M."/>
            <person name="Riggs F.R."/>
            <person name="Salzberg S.L."/>
            <person name="Schein J.E."/>
            <person name="Shvartsbeyn A."/>
            <person name="Shin H."/>
            <person name="Shumway M."/>
            <person name="Specht C.A."/>
            <person name="Suh B.B."/>
            <person name="Tenney A."/>
            <person name="Utterback T.R."/>
            <person name="Wickes B.L."/>
            <person name="Wortman J.R."/>
            <person name="Wye N.H."/>
            <person name="Kronstad J.W."/>
            <person name="Lodge J.K."/>
            <person name="Heitman J."/>
            <person name="Davis R.W."/>
            <person name="Fraser C.M."/>
            <person name="Hyman R.W."/>
        </authorList>
    </citation>
    <scope>NUCLEOTIDE SEQUENCE [LARGE SCALE GENOMIC DNA]</scope>
    <source>
        <strain>JEC21 / ATCC MYA-565</strain>
    </source>
</reference>
<organism>
    <name type="scientific">Cryptococcus neoformans var. neoformans serotype D (strain JEC21 / ATCC MYA-565)</name>
    <name type="common">Filobasidiella neoformans</name>
    <dbReference type="NCBI Taxonomy" id="214684"/>
    <lineage>
        <taxon>Eukaryota</taxon>
        <taxon>Fungi</taxon>
        <taxon>Dikarya</taxon>
        <taxon>Basidiomycota</taxon>
        <taxon>Agaricomycotina</taxon>
        <taxon>Tremellomycetes</taxon>
        <taxon>Tremellales</taxon>
        <taxon>Cryptococcaceae</taxon>
        <taxon>Cryptococcus</taxon>
        <taxon>Cryptococcus neoformans species complex</taxon>
    </lineage>
</organism>
<protein>
    <recommendedName>
        <fullName>DNA replication complex GINS protein PSF1</fullName>
    </recommendedName>
</protein>
<evidence type="ECO:0000250" key="1"/>
<evidence type="ECO:0000305" key="2"/>
<name>PSF1_CRYNJ</name>
<dbReference type="EMBL" id="AE017347">
    <property type="protein sequence ID" value="AAW44861.1"/>
    <property type="molecule type" value="Genomic_DNA"/>
</dbReference>
<dbReference type="RefSeq" id="XP_572168.1">
    <property type="nucleotide sequence ID" value="XM_572168.1"/>
</dbReference>
<dbReference type="SMR" id="P0CQ28"/>
<dbReference type="FunCoup" id="P0CQ28">
    <property type="interactions" value="202"/>
</dbReference>
<dbReference type="STRING" id="214684.P0CQ28"/>
<dbReference type="PaxDb" id="214684-P0CQ28"/>
<dbReference type="EnsemblFungi" id="AAW44861">
    <property type="protein sequence ID" value="AAW44861"/>
    <property type="gene ID" value="CNG02090"/>
</dbReference>
<dbReference type="GeneID" id="3258858"/>
<dbReference type="KEGG" id="cne:CNG02090"/>
<dbReference type="VEuPathDB" id="FungiDB:CNG02090"/>
<dbReference type="eggNOG" id="KOG3303">
    <property type="taxonomic scope" value="Eukaryota"/>
</dbReference>
<dbReference type="HOGENOM" id="CLU_079191_0_0_1"/>
<dbReference type="InParanoid" id="P0CQ28"/>
<dbReference type="OMA" id="MFCEKAT"/>
<dbReference type="OrthoDB" id="10252587at2759"/>
<dbReference type="Proteomes" id="UP000002149">
    <property type="component" value="Chromosome 7"/>
</dbReference>
<dbReference type="GO" id="GO:0071162">
    <property type="term" value="C:CMG complex"/>
    <property type="evidence" value="ECO:0007669"/>
    <property type="project" value="EnsemblFungi"/>
</dbReference>
<dbReference type="GO" id="GO:0000811">
    <property type="term" value="C:GINS complex"/>
    <property type="evidence" value="ECO:0000318"/>
    <property type="project" value="GO_Central"/>
</dbReference>
<dbReference type="GO" id="GO:0043596">
    <property type="term" value="C:nuclear replication fork"/>
    <property type="evidence" value="ECO:0007669"/>
    <property type="project" value="EnsemblFungi"/>
</dbReference>
<dbReference type="GO" id="GO:1902983">
    <property type="term" value="P:DNA strand elongation involved in mitotic DNA replication"/>
    <property type="evidence" value="ECO:0000318"/>
    <property type="project" value="GO_Central"/>
</dbReference>
<dbReference type="GO" id="GO:0000727">
    <property type="term" value="P:double-strand break repair via break-induced replication"/>
    <property type="evidence" value="ECO:0007669"/>
    <property type="project" value="EnsemblFungi"/>
</dbReference>
<dbReference type="CDD" id="cd11710">
    <property type="entry name" value="GINS_A_psf1"/>
    <property type="match status" value="1"/>
</dbReference>
<dbReference type="CDD" id="cd21696">
    <property type="entry name" value="GINS_B_Psf1"/>
    <property type="match status" value="1"/>
</dbReference>
<dbReference type="FunFam" id="1.20.58.1030:FF:000003">
    <property type="entry name" value="DNA replication complex GINS protein PSF1"/>
    <property type="match status" value="1"/>
</dbReference>
<dbReference type="Gene3D" id="1.20.58.1030">
    <property type="match status" value="1"/>
</dbReference>
<dbReference type="InterPro" id="IPR021151">
    <property type="entry name" value="GINS_A"/>
</dbReference>
<dbReference type="InterPro" id="IPR036224">
    <property type="entry name" value="GINS_bundle-like_dom_sf"/>
</dbReference>
<dbReference type="InterPro" id="IPR005339">
    <property type="entry name" value="GINS_Psf1"/>
</dbReference>
<dbReference type="InterPro" id="IPR056783">
    <property type="entry name" value="PSF1_C"/>
</dbReference>
<dbReference type="PANTHER" id="PTHR12914:SF2">
    <property type="entry name" value="DNA REPLICATION COMPLEX GINS PROTEIN PSF1"/>
    <property type="match status" value="1"/>
</dbReference>
<dbReference type="PANTHER" id="PTHR12914">
    <property type="entry name" value="PARTNER OF SLD5"/>
    <property type="match status" value="1"/>
</dbReference>
<dbReference type="Pfam" id="PF24997">
    <property type="entry name" value="PSF1_C"/>
    <property type="match status" value="1"/>
</dbReference>
<dbReference type="Pfam" id="PF05916">
    <property type="entry name" value="Sld5"/>
    <property type="match status" value="1"/>
</dbReference>
<dbReference type="SUPFAM" id="SSF158573">
    <property type="entry name" value="GINS helical bundle-like"/>
    <property type="match status" value="1"/>
</dbReference>